<reference key="1">
    <citation type="journal article" date="1994" name="Dev. Genet.">
        <title>Cloning of thyroid hormone receptor genes expressed in metamorphosing flounder.</title>
        <authorList>
            <person name="Yamano K."/>
            <person name="Araki K."/>
            <person name="Sekikawa K."/>
            <person name="Inui Y."/>
        </authorList>
    </citation>
    <scope>NUCLEOTIDE SEQUENCE [MRNA]</scope>
</reference>
<sequence>MEPMSNKQDSNSSEGDEKGWPDVPKRKRKNSQCSMKSMSALSVSVPGYIPSYLEKDEPCVVCGDKATGYHYRCITCEGCKGFFRRTIQKNLHPSYSCKYEGCCIIDKITRNQCQLCRFKKCISVGMAMDLVLDDSKRVAKRRLIEENREKRKREEMVRTLQIRPEPDTAEWELIRMATDAHRHTNAQGSSWKQKRKFLSDDIGQSPMVPTSDGDKVDLEAFSEFTKIMTPAITRVVDFAKKLPMFSELPCEDQIILLKGCCMEIMSLRAAVRYDPDSETLTLNSEMAVKREQLKNGGLGVVSDAIFDLGKELGQFNLDDTEVALMQAVLLMSSDRSGHQCMEKIEQCQEAYLLAFEHYINYRKHNIPHFWPKLLMKVTDLRMIGACHASRFLHMKVECPSELFPPLFLEVFEDQEV</sequence>
<feature type="chain" id="PRO_0000053436" description="Thyroid hormone receptor alpha-A">
    <location>
        <begin position="1"/>
        <end position="416"/>
    </location>
</feature>
<feature type="domain" description="NR LBD" evidence="2">
    <location>
        <begin position="169"/>
        <end position="413"/>
    </location>
</feature>
<feature type="DNA-binding region" description="Nuclear receptor" evidence="1">
    <location>
        <begin position="59"/>
        <end position="126"/>
    </location>
</feature>
<feature type="zinc finger region" description="NR C4-type" evidence="1">
    <location>
        <begin position="59"/>
        <end position="79"/>
    </location>
</feature>
<feature type="zinc finger region" description="NR C4-type" evidence="1">
    <location>
        <begin position="97"/>
        <end position="121"/>
    </location>
</feature>
<feature type="region of interest" description="Modulating">
    <location>
        <begin position="1"/>
        <end position="58"/>
    </location>
</feature>
<feature type="region of interest" description="Disordered" evidence="3">
    <location>
        <begin position="1"/>
        <end position="37"/>
    </location>
</feature>
<feature type="compositionally biased region" description="Polar residues" evidence="3">
    <location>
        <begin position="1"/>
        <end position="13"/>
    </location>
</feature>
<feature type="compositionally biased region" description="Basic and acidic residues" evidence="3">
    <location>
        <begin position="15"/>
        <end position="24"/>
    </location>
</feature>
<proteinExistence type="evidence at transcript level"/>
<keyword id="KW-0238">DNA-binding</keyword>
<keyword id="KW-0479">Metal-binding</keyword>
<keyword id="KW-0539">Nucleus</keyword>
<keyword id="KW-0675">Receptor</keyword>
<keyword id="KW-0804">Transcription</keyword>
<keyword id="KW-0805">Transcription regulation</keyword>
<keyword id="KW-0862">Zinc</keyword>
<keyword id="KW-0863">Zinc-finger</keyword>
<accession>Q91241</accession>
<protein>
    <recommendedName>
        <fullName>Thyroid hormone receptor alpha-A</fullName>
        <shortName>THR-alpha-A</shortName>
    </recommendedName>
    <alternativeName>
        <fullName>Nuclear receptor subfamily 1 group A member 1-A</fullName>
    </alternativeName>
</protein>
<dbReference type="EMBL" id="D16461">
    <property type="protein sequence ID" value="BAA03928.1"/>
    <property type="molecule type" value="mRNA"/>
</dbReference>
<dbReference type="PIR" id="I51096">
    <property type="entry name" value="I51096"/>
</dbReference>
<dbReference type="SMR" id="Q91241"/>
<dbReference type="GO" id="GO:0090575">
    <property type="term" value="C:RNA polymerase II transcription regulator complex"/>
    <property type="evidence" value="ECO:0007669"/>
    <property type="project" value="TreeGrafter"/>
</dbReference>
<dbReference type="GO" id="GO:0004879">
    <property type="term" value="F:nuclear receptor activity"/>
    <property type="evidence" value="ECO:0007669"/>
    <property type="project" value="InterPro"/>
</dbReference>
<dbReference type="GO" id="GO:0000978">
    <property type="term" value="F:RNA polymerase II cis-regulatory region sequence-specific DNA binding"/>
    <property type="evidence" value="ECO:0007669"/>
    <property type="project" value="TreeGrafter"/>
</dbReference>
<dbReference type="GO" id="GO:0008270">
    <property type="term" value="F:zinc ion binding"/>
    <property type="evidence" value="ECO:0007669"/>
    <property type="project" value="UniProtKB-KW"/>
</dbReference>
<dbReference type="GO" id="GO:0030154">
    <property type="term" value="P:cell differentiation"/>
    <property type="evidence" value="ECO:0007669"/>
    <property type="project" value="TreeGrafter"/>
</dbReference>
<dbReference type="GO" id="GO:0000122">
    <property type="term" value="P:negative regulation of transcription by RNA polymerase II"/>
    <property type="evidence" value="ECO:0007669"/>
    <property type="project" value="TreeGrafter"/>
</dbReference>
<dbReference type="GO" id="GO:0045944">
    <property type="term" value="P:positive regulation of transcription by RNA polymerase II"/>
    <property type="evidence" value="ECO:0007669"/>
    <property type="project" value="TreeGrafter"/>
</dbReference>
<dbReference type="GO" id="GO:0048384">
    <property type="term" value="P:retinoic acid receptor signaling pathway"/>
    <property type="evidence" value="ECO:0007669"/>
    <property type="project" value="TreeGrafter"/>
</dbReference>
<dbReference type="GO" id="GO:0002154">
    <property type="term" value="P:thyroid hormone receptor signaling pathway"/>
    <property type="evidence" value="ECO:0007669"/>
    <property type="project" value="TreeGrafter"/>
</dbReference>
<dbReference type="CDD" id="cd06961">
    <property type="entry name" value="NR_DBD_TR"/>
    <property type="match status" value="1"/>
</dbReference>
<dbReference type="CDD" id="cd06935">
    <property type="entry name" value="NR_LBD_TR"/>
    <property type="match status" value="1"/>
</dbReference>
<dbReference type="FunFam" id="1.10.565.10:FF:000006">
    <property type="entry name" value="Thyroid hormone receptor beta 2"/>
    <property type="match status" value="1"/>
</dbReference>
<dbReference type="FunFam" id="3.30.50.10:FF:000011">
    <property type="entry name" value="Thyroid hormone receptor beta isoform"/>
    <property type="match status" value="1"/>
</dbReference>
<dbReference type="Gene3D" id="3.30.50.10">
    <property type="entry name" value="Erythroid Transcription Factor GATA-1, subunit A"/>
    <property type="match status" value="1"/>
</dbReference>
<dbReference type="Gene3D" id="1.10.565.10">
    <property type="entry name" value="Retinoid X Receptor"/>
    <property type="match status" value="1"/>
</dbReference>
<dbReference type="InterPro" id="IPR035500">
    <property type="entry name" value="NHR-like_dom_sf"/>
</dbReference>
<dbReference type="InterPro" id="IPR000536">
    <property type="entry name" value="Nucl_hrmn_rcpt_lig-bd"/>
</dbReference>
<dbReference type="InterPro" id="IPR050234">
    <property type="entry name" value="Nuclear_hormone_rcpt_NR1"/>
</dbReference>
<dbReference type="InterPro" id="IPR001723">
    <property type="entry name" value="Nuclear_hrmn_rcpt"/>
</dbReference>
<dbReference type="InterPro" id="IPR001728">
    <property type="entry name" value="ThyrH_rcpt"/>
</dbReference>
<dbReference type="InterPro" id="IPR001628">
    <property type="entry name" value="Znf_hrmn_rcpt"/>
</dbReference>
<dbReference type="InterPro" id="IPR013088">
    <property type="entry name" value="Znf_NHR/GATA"/>
</dbReference>
<dbReference type="PANTHER" id="PTHR24082">
    <property type="entry name" value="NUCLEAR HORMONE RECEPTOR"/>
    <property type="match status" value="1"/>
</dbReference>
<dbReference type="PANTHER" id="PTHR24082:SF42">
    <property type="entry name" value="THYROID HORMONE RECEPTOR ALPHA"/>
    <property type="match status" value="1"/>
</dbReference>
<dbReference type="Pfam" id="PF00104">
    <property type="entry name" value="Hormone_recep"/>
    <property type="match status" value="1"/>
</dbReference>
<dbReference type="Pfam" id="PF00105">
    <property type="entry name" value="zf-C4"/>
    <property type="match status" value="1"/>
</dbReference>
<dbReference type="PRINTS" id="PR00398">
    <property type="entry name" value="STRDHORMONER"/>
</dbReference>
<dbReference type="PRINTS" id="PR00047">
    <property type="entry name" value="STROIDFINGER"/>
</dbReference>
<dbReference type="PRINTS" id="PR00546">
    <property type="entry name" value="THYROIDHORMR"/>
</dbReference>
<dbReference type="SMART" id="SM00430">
    <property type="entry name" value="HOLI"/>
    <property type="match status" value="1"/>
</dbReference>
<dbReference type="SMART" id="SM00399">
    <property type="entry name" value="ZnF_C4"/>
    <property type="match status" value="1"/>
</dbReference>
<dbReference type="SUPFAM" id="SSF57716">
    <property type="entry name" value="Glucocorticoid receptor-like (DNA-binding domain)"/>
    <property type="match status" value="1"/>
</dbReference>
<dbReference type="SUPFAM" id="SSF48508">
    <property type="entry name" value="Nuclear receptor ligand-binding domain"/>
    <property type="match status" value="1"/>
</dbReference>
<dbReference type="PROSITE" id="PS51843">
    <property type="entry name" value="NR_LBD"/>
    <property type="match status" value="1"/>
</dbReference>
<dbReference type="PROSITE" id="PS00031">
    <property type="entry name" value="NUCLEAR_REC_DBD_1"/>
    <property type="match status" value="1"/>
</dbReference>
<dbReference type="PROSITE" id="PS51030">
    <property type="entry name" value="NUCLEAR_REC_DBD_2"/>
    <property type="match status" value="1"/>
</dbReference>
<comment type="function">
    <text>High affinity receptor for triiodothyronine.</text>
</comment>
<comment type="subcellular location">
    <subcellularLocation>
        <location>Nucleus</location>
    </subcellularLocation>
</comment>
<comment type="domain">
    <text>Composed of three domains: a modulating N-terminal domain, a DNA-binding domain and a C-terminal ligand-binding domain.</text>
</comment>
<comment type="similarity">
    <text evidence="4">Belongs to the nuclear hormone receptor family. NR1 subfamily.</text>
</comment>
<gene>
    <name type="primary">thra1</name>
    <name type="synonym">nr1a1-a</name>
</gene>
<name>THAA_PAROL</name>
<organism>
    <name type="scientific">Paralichthys olivaceus</name>
    <name type="common">Bastard halibut</name>
    <name type="synonym">Hippoglossus olivaceus</name>
    <dbReference type="NCBI Taxonomy" id="8255"/>
    <lineage>
        <taxon>Eukaryota</taxon>
        <taxon>Metazoa</taxon>
        <taxon>Chordata</taxon>
        <taxon>Craniata</taxon>
        <taxon>Vertebrata</taxon>
        <taxon>Euteleostomi</taxon>
        <taxon>Actinopterygii</taxon>
        <taxon>Neopterygii</taxon>
        <taxon>Teleostei</taxon>
        <taxon>Neoteleostei</taxon>
        <taxon>Acanthomorphata</taxon>
        <taxon>Carangaria</taxon>
        <taxon>Pleuronectiformes</taxon>
        <taxon>Pleuronectoidei</taxon>
        <taxon>Paralichthyidae</taxon>
        <taxon>Paralichthys</taxon>
    </lineage>
</organism>
<evidence type="ECO:0000255" key="1">
    <source>
        <dbReference type="PROSITE-ProRule" id="PRU00407"/>
    </source>
</evidence>
<evidence type="ECO:0000255" key="2">
    <source>
        <dbReference type="PROSITE-ProRule" id="PRU01189"/>
    </source>
</evidence>
<evidence type="ECO:0000256" key="3">
    <source>
        <dbReference type="SAM" id="MobiDB-lite"/>
    </source>
</evidence>
<evidence type="ECO:0000305" key="4"/>